<proteinExistence type="inferred from homology"/>
<protein>
    <recommendedName>
        <fullName evidence="1">Aspartate--tRNA(Asp/Asn) ligase</fullName>
        <ecNumber evidence="1">6.1.1.23</ecNumber>
    </recommendedName>
    <alternativeName>
        <fullName evidence="1">Aspartyl-tRNA synthetase</fullName>
        <shortName evidence="1">AspRS</shortName>
    </alternativeName>
    <alternativeName>
        <fullName evidence="1">Non-discriminating aspartyl-tRNA synthetase</fullName>
        <shortName evidence="1">ND-AspRS</shortName>
    </alternativeName>
</protein>
<comment type="function">
    <text evidence="1">Aspartyl-tRNA synthetase with relaxed tRNA specificity since it is able to aspartylate not only its cognate tRNA(Asp) but also tRNA(Asn). Reaction proceeds in two steps: L-aspartate is first activated by ATP to form Asp-AMP and then transferred to the acceptor end of tRNA(Asp/Asn).</text>
</comment>
<comment type="catalytic activity">
    <reaction evidence="1">
        <text>tRNA(Asx) + L-aspartate + ATP = L-aspartyl-tRNA(Asx) + AMP + diphosphate</text>
        <dbReference type="Rhea" id="RHEA:18349"/>
        <dbReference type="Rhea" id="RHEA-COMP:9710"/>
        <dbReference type="Rhea" id="RHEA-COMP:9711"/>
        <dbReference type="ChEBI" id="CHEBI:29991"/>
        <dbReference type="ChEBI" id="CHEBI:30616"/>
        <dbReference type="ChEBI" id="CHEBI:33019"/>
        <dbReference type="ChEBI" id="CHEBI:78442"/>
        <dbReference type="ChEBI" id="CHEBI:78516"/>
        <dbReference type="ChEBI" id="CHEBI:456215"/>
        <dbReference type="EC" id="6.1.1.23"/>
    </reaction>
</comment>
<comment type="subunit">
    <text evidence="1">Homodimer.</text>
</comment>
<comment type="subcellular location">
    <subcellularLocation>
        <location evidence="1">Cytoplasm</location>
    </subcellularLocation>
</comment>
<comment type="similarity">
    <text evidence="1">Belongs to the class-II aminoacyl-tRNA synthetase family. Type 1 subfamily.</text>
</comment>
<organism>
    <name type="scientific">Borreliella afzelii (strain PKo)</name>
    <name type="common">Borrelia afzelii</name>
    <dbReference type="NCBI Taxonomy" id="390236"/>
    <lineage>
        <taxon>Bacteria</taxon>
        <taxon>Pseudomonadati</taxon>
        <taxon>Spirochaetota</taxon>
        <taxon>Spirochaetia</taxon>
        <taxon>Spirochaetales</taxon>
        <taxon>Borreliaceae</taxon>
        <taxon>Borreliella</taxon>
    </lineage>
</organism>
<evidence type="ECO:0000255" key="1">
    <source>
        <dbReference type="HAMAP-Rule" id="MF_00044"/>
    </source>
</evidence>
<reference key="1">
    <citation type="journal article" date="2006" name="BMC Genomics">
        <title>Comparative genome analysis: selection pressure on the Borrelia vls cassettes is essential for infectivity.</title>
        <authorList>
            <person name="Gloeckner G."/>
            <person name="Schulte-Spechtel U."/>
            <person name="Schilhabel M."/>
            <person name="Felder M."/>
            <person name="Suehnel J."/>
            <person name="Wilske B."/>
            <person name="Platzer M."/>
        </authorList>
    </citation>
    <scope>NUCLEOTIDE SEQUENCE [LARGE SCALE GENOMIC DNA]</scope>
    <source>
        <strain>PKo</strain>
    </source>
</reference>
<reference key="2">
    <citation type="journal article" date="2011" name="J. Bacteriol.">
        <title>Whole-genome sequences of two Borrelia afzelii and two Borrelia garinii Lyme disease agent isolates.</title>
        <authorList>
            <person name="Casjens S.R."/>
            <person name="Mongodin E.F."/>
            <person name="Qiu W.G."/>
            <person name="Dunn J.J."/>
            <person name="Luft B.J."/>
            <person name="Fraser-Liggett C.M."/>
            <person name="Schutzer S.E."/>
        </authorList>
    </citation>
    <scope>NUCLEOTIDE SEQUENCE [LARGE SCALE GENOMIC DNA]</scope>
    <source>
        <strain>PKo</strain>
    </source>
</reference>
<dbReference type="EC" id="6.1.1.23" evidence="1"/>
<dbReference type="EMBL" id="CP000395">
    <property type="protein sequence ID" value="ABH01715.1"/>
    <property type="molecule type" value="Genomic_DNA"/>
</dbReference>
<dbReference type="EMBL" id="CP002933">
    <property type="protein sequence ID" value="AEL69669.1"/>
    <property type="molecule type" value="Genomic_DNA"/>
</dbReference>
<dbReference type="RefSeq" id="WP_011601031.1">
    <property type="nucleotide sequence ID" value="NC_008277.1"/>
</dbReference>
<dbReference type="SMR" id="Q0SN63"/>
<dbReference type="STRING" id="29518.BLA32_02050"/>
<dbReference type="KEGG" id="baf:BAPKO_0468"/>
<dbReference type="KEGG" id="bafz:BafPKo_0457"/>
<dbReference type="PATRIC" id="fig|390236.22.peg.441"/>
<dbReference type="eggNOG" id="COG0173">
    <property type="taxonomic scope" value="Bacteria"/>
</dbReference>
<dbReference type="HOGENOM" id="CLU_014330_3_2_12"/>
<dbReference type="OrthoDB" id="9802326at2"/>
<dbReference type="Proteomes" id="UP000005216">
    <property type="component" value="Chromosome"/>
</dbReference>
<dbReference type="GO" id="GO:0005737">
    <property type="term" value="C:cytoplasm"/>
    <property type="evidence" value="ECO:0007669"/>
    <property type="project" value="UniProtKB-SubCell"/>
</dbReference>
<dbReference type="GO" id="GO:0004815">
    <property type="term" value="F:aspartate-tRNA ligase activity"/>
    <property type="evidence" value="ECO:0007669"/>
    <property type="project" value="UniProtKB-UniRule"/>
</dbReference>
<dbReference type="GO" id="GO:0050560">
    <property type="term" value="F:aspartate-tRNA(Asn) ligase activity"/>
    <property type="evidence" value="ECO:0007669"/>
    <property type="project" value="UniProtKB-EC"/>
</dbReference>
<dbReference type="GO" id="GO:0005524">
    <property type="term" value="F:ATP binding"/>
    <property type="evidence" value="ECO:0007669"/>
    <property type="project" value="UniProtKB-UniRule"/>
</dbReference>
<dbReference type="GO" id="GO:0003676">
    <property type="term" value="F:nucleic acid binding"/>
    <property type="evidence" value="ECO:0007669"/>
    <property type="project" value="InterPro"/>
</dbReference>
<dbReference type="GO" id="GO:0006422">
    <property type="term" value="P:aspartyl-tRNA aminoacylation"/>
    <property type="evidence" value="ECO:0007669"/>
    <property type="project" value="UniProtKB-UniRule"/>
</dbReference>
<dbReference type="CDD" id="cd00777">
    <property type="entry name" value="AspRS_core"/>
    <property type="match status" value="1"/>
</dbReference>
<dbReference type="CDD" id="cd04317">
    <property type="entry name" value="EcAspRS_like_N"/>
    <property type="match status" value="1"/>
</dbReference>
<dbReference type="Gene3D" id="3.30.930.10">
    <property type="entry name" value="Bira Bifunctional Protein, Domain 2"/>
    <property type="match status" value="1"/>
</dbReference>
<dbReference type="Gene3D" id="3.30.1360.30">
    <property type="entry name" value="GAD-like domain"/>
    <property type="match status" value="1"/>
</dbReference>
<dbReference type="Gene3D" id="2.40.50.140">
    <property type="entry name" value="Nucleic acid-binding proteins"/>
    <property type="match status" value="1"/>
</dbReference>
<dbReference type="HAMAP" id="MF_00044">
    <property type="entry name" value="Asp_tRNA_synth_type1"/>
    <property type="match status" value="1"/>
</dbReference>
<dbReference type="InterPro" id="IPR004364">
    <property type="entry name" value="Aa-tRNA-synt_II"/>
</dbReference>
<dbReference type="InterPro" id="IPR006195">
    <property type="entry name" value="aa-tRNA-synth_II"/>
</dbReference>
<dbReference type="InterPro" id="IPR045864">
    <property type="entry name" value="aa-tRNA-synth_II/BPL/LPL"/>
</dbReference>
<dbReference type="InterPro" id="IPR004524">
    <property type="entry name" value="Asp-tRNA-ligase_1"/>
</dbReference>
<dbReference type="InterPro" id="IPR047089">
    <property type="entry name" value="Asp-tRNA-ligase_1_N"/>
</dbReference>
<dbReference type="InterPro" id="IPR002312">
    <property type="entry name" value="Asp/Asn-tRNA-synth_IIb"/>
</dbReference>
<dbReference type="InterPro" id="IPR047090">
    <property type="entry name" value="AspRS_core"/>
</dbReference>
<dbReference type="InterPro" id="IPR004115">
    <property type="entry name" value="GAD-like_sf"/>
</dbReference>
<dbReference type="InterPro" id="IPR029351">
    <property type="entry name" value="GAD_dom"/>
</dbReference>
<dbReference type="InterPro" id="IPR012340">
    <property type="entry name" value="NA-bd_OB-fold"/>
</dbReference>
<dbReference type="InterPro" id="IPR004365">
    <property type="entry name" value="NA-bd_OB_tRNA"/>
</dbReference>
<dbReference type="NCBIfam" id="TIGR00459">
    <property type="entry name" value="aspS_bact"/>
    <property type="match status" value="1"/>
</dbReference>
<dbReference type="NCBIfam" id="NF001750">
    <property type="entry name" value="PRK00476.1"/>
    <property type="match status" value="1"/>
</dbReference>
<dbReference type="PANTHER" id="PTHR22594:SF5">
    <property type="entry name" value="ASPARTATE--TRNA LIGASE, MITOCHONDRIAL"/>
    <property type="match status" value="1"/>
</dbReference>
<dbReference type="PANTHER" id="PTHR22594">
    <property type="entry name" value="ASPARTYL/LYSYL-TRNA SYNTHETASE"/>
    <property type="match status" value="1"/>
</dbReference>
<dbReference type="Pfam" id="PF02938">
    <property type="entry name" value="GAD"/>
    <property type="match status" value="1"/>
</dbReference>
<dbReference type="Pfam" id="PF00152">
    <property type="entry name" value="tRNA-synt_2"/>
    <property type="match status" value="1"/>
</dbReference>
<dbReference type="Pfam" id="PF01336">
    <property type="entry name" value="tRNA_anti-codon"/>
    <property type="match status" value="1"/>
</dbReference>
<dbReference type="PRINTS" id="PR01042">
    <property type="entry name" value="TRNASYNTHASP"/>
</dbReference>
<dbReference type="SUPFAM" id="SSF55681">
    <property type="entry name" value="Class II aaRS and biotin synthetases"/>
    <property type="match status" value="1"/>
</dbReference>
<dbReference type="SUPFAM" id="SSF55261">
    <property type="entry name" value="GAD domain-like"/>
    <property type="match status" value="1"/>
</dbReference>
<dbReference type="SUPFAM" id="SSF50249">
    <property type="entry name" value="Nucleic acid-binding proteins"/>
    <property type="match status" value="1"/>
</dbReference>
<dbReference type="PROSITE" id="PS50862">
    <property type="entry name" value="AA_TRNA_LIGASE_II"/>
    <property type="match status" value="1"/>
</dbReference>
<sequence length="586" mass="68229">MFKVIKCNELNEKLINKKVEINAWVKKIRHHGKFTFLDIRDRYEKAQVLITEEHLLKIVEKIKLEYCIKIQGLLIKRPSNMINANMTTGYFEILAKNIEIISKCNELPFMIEDDNNASENSKLKYRYLDLRRDSLKNKIILRCQATHLIRNFLVKRKFLELETPTFVKSTPEGARDFVIPSRIHKGSFYALPQSPQLYKQLIMIAGFDKYFQIARCYRDEDSRGDRQPEFTQLDLEMSFVKKENIFKLIENMLFSIFKNCLNIKLSKKFKKITYKTAMNKYGSDKPDTRFELTLQDISRNLKNSEFNVFKDILNNKGSIKTLIVKDKADTFSRAKINNLEEIAKLYKTQGLYFTKIENNKFSGGIAKFLKTEEQQLIKAYSLENNDIIFFIANNKWEIACKAMGQIRIKIANDLGLIDENKFEFLWVYDFPLFEYDENTKTYIPAHHMFSIPKKRYISNLEKNPNKAIGEIYDLVLNGVELGSGSIRIHNKELQQRIFNIIGFQKEKSEDRFGFFLKALEYGAPNHGGIAIGIDRLIMLMTKSTSIKDVILFPKNSFAASPLDNSPSKISNEQLKELGINIAPDDT</sequence>
<name>SYDND_BORAP</name>
<accession>Q0SN63</accession>
<accession>G0IS88</accession>
<feature type="chain" id="PRO_1000006640" description="Aspartate--tRNA(Asp/Asn) ligase">
    <location>
        <begin position="1"/>
        <end position="586"/>
    </location>
</feature>
<feature type="region of interest" description="Aspartate" evidence="1">
    <location>
        <begin position="196"/>
        <end position="199"/>
    </location>
</feature>
<feature type="binding site" evidence="1">
    <location>
        <position position="172"/>
    </location>
    <ligand>
        <name>L-aspartate</name>
        <dbReference type="ChEBI" id="CHEBI:29991"/>
    </ligand>
</feature>
<feature type="binding site" evidence="1">
    <location>
        <begin position="218"/>
        <end position="220"/>
    </location>
    <ligand>
        <name>ATP</name>
        <dbReference type="ChEBI" id="CHEBI:30616"/>
    </ligand>
</feature>
<feature type="binding site" evidence="1">
    <location>
        <position position="218"/>
    </location>
    <ligand>
        <name>L-aspartate</name>
        <dbReference type="ChEBI" id="CHEBI:29991"/>
    </ligand>
</feature>
<feature type="binding site" evidence="1">
    <location>
        <position position="227"/>
    </location>
    <ligand>
        <name>ATP</name>
        <dbReference type="ChEBI" id="CHEBI:30616"/>
    </ligand>
</feature>
<feature type="binding site" evidence="1">
    <location>
        <position position="446"/>
    </location>
    <ligand>
        <name>L-aspartate</name>
        <dbReference type="ChEBI" id="CHEBI:29991"/>
    </ligand>
</feature>
<feature type="binding site" evidence="1">
    <location>
        <position position="480"/>
    </location>
    <ligand>
        <name>ATP</name>
        <dbReference type="ChEBI" id="CHEBI:30616"/>
    </ligand>
</feature>
<feature type="binding site" evidence="1">
    <location>
        <position position="487"/>
    </location>
    <ligand>
        <name>L-aspartate</name>
        <dbReference type="ChEBI" id="CHEBI:29991"/>
    </ligand>
</feature>
<feature type="binding site" evidence="1">
    <location>
        <begin position="532"/>
        <end position="535"/>
    </location>
    <ligand>
        <name>ATP</name>
        <dbReference type="ChEBI" id="CHEBI:30616"/>
    </ligand>
</feature>
<feature type="site" description="Important for tRNA non-discrimination" evidence="1">
    <location>
        <position position="31"/>
    </location>
</feature>
<gene>
    <name evidence="1" type="primary">aspS</name>
    <name type="ordered locus">BAPKO_0468</name>
    <name type="ordered locus">BafPKo_0457</name>
</gene>
<keyword id="KW-0030">Aminoacyl-tRNA synthetase</keyword>
<keyword id="KW-0067">ATP-binding</keyword>
<keyword id="KW-0963">Cytoplasm</keyword>
<keyword id="KW-0436">Ligase</keyword>
<keyword id="KW-0547">Nucleotide-binding</keyword>
<keyword id="KW-0648">Protein biosynthesis</keyword>